<comment type="function">
    <text evidence="1">Responsible for channeling the electrons from the oxidation of dihydroorotate from the FMN redox center in the PyrD type B subunit to the ultimate electron acceptor NAD(+).</text>
</comment>
<comment type="cofactor">
    <cofactor evidence="1">
        <name>[2Fe-2S] cluster</name>
        <dbReference type="ChEBI" id="CHEBI:190135"/>
    </cofactor>
    <text evidence="1">Binds 1 [2Fe-2S] cluster per subunit.</text>
</comment>
<comment type="cofactor">
    <cofactor evidence="1">
        <name>FAD</name>
        <dbReference type="ChEBI" id="CHEBI:57692"/>
    </cofactor>
    <text evidence="1">Binds 1 FAD per subunit.</text>
</comment>
<comment type="pathway">
    <text evidence="1">Pyrimidine metabolism; UMP biosynthesis via de novo pathway; orotate from (S)-dihydroorotate (NAD(+) route): step 1/1.</text>
</comment>
<comment type="subunit">
    <text evidence="1">Heterotetramer of 2 PyrK and 2 PyrD type B subunits.</text>
</comment>
<comment type="similarity">
    <text evidence="1">Belongs to the PyrK family.</text>
</comment>
<accession>O27280</accession>
<sequence length="266" mass="29773">MDSMNVPEVLEIKRIVEESESVKTFIFSWDFRREVRPGQFVMVWDFRDEKPMSVSLIDPVRSEIGISIRRVGEFTDRVHGLSEGDLLGIRGPYGRGFELMGRDILLVGGGIGMAPLAALADEATARGMRVDALVAARTADELLFLDRLEAAGVNISTCTDDGSCGFKGFAHERLLTLEENHDMAAVCGPEPMMFQVMRILDERDVPAQLSLERYMKCAVGICGQCCLDDTGFRVCAEGPVFWSQELSRVREFGRYRRDPAGRRVPW</sequence>
<gene>
    <name evidence="1" type="primary">pyrK</name>
    <name type="ordered locus">MTH_1212</name>
</gene>
<reference key="1">
    <citation type="journal article" date="1997" name="J. Bacteriol.">
        <title>Complete genome sequence of Methanobacterium thermoautotrophicum deltaH: functional analysis and comparative genomics.</title>
        <authorList>
            <person name="Smith D.R."/>
            <person name="Doucette-Stamm L.A."/>
            <person name="Deloughery C."/>
            <person name="Lee H.-M."/>
            <person name="Dubois J."/>
            <person name="Aldredge T."/>
            <person name="Bashirzadeh R."/>
            <person name="Blakely D."/>
            <person name="Cook R."/>
            <person name="Gilbert K."/>
            <person name="Harrison D."/>
            <person name="Hoang L."/>
            <person name="Keagle P."/>
            <person name="Lumm W."/>
            <person name="Pothier B."/>
            <person name="Qiu D."/>
            <person name="Spadafora R."/>
            <person name="Vicare R."/>
            <person name="Wang Y."/>
            <person name="Wierzbowski J."/>
            <person name="Gibson R."/>
            <person name="Jiwani N."/>
            <person name="Caruso A."/>
            <person name="Bush D."/>
            <person name="Safer H."/>
            <person name="Patwell D."/>
            <person name="Prabhakar S."/>
            <person name="McDougall S."/>
            <person name="Shimer G."/>
            <person name="Goyal A."/>
            <person name="Pietrovski S."/>
            <person name="Church G.M."/>
            <person name="Daniels C.J."/>
            <person name="Mao J.-I."/>
            <person name="Rice P."/>
            <person name="Noelling J."/>
            <person name="Reeve J.N."/>
        </authorList>
    </citation>
    <scope>NUCLEOTIDE SEQUENCE [LARGE SCALE GENOMIC DNA]</scope>
    <source>
        <strain>ATCC 29096 / DSM 1053 / JCM 10044 / NBRC 100330 / Delta H</strain>
    </source>
</reference>
<protein>
    <recommendedName>
        <fullName evidence="1">Probable dihydroorotate dehydrogenase B (NAD(+)), electron transfer subunit</fullName>
    </recommendedName>
    <alternativeName>
        <fullName evidence="1">Dihydroorotate oxidase B, electron transfer subunit</fullName>
    </alternativeName>
</protein>
<proteinExistence type="inferred from homology"/>
<keyword id="KW-0001">2Fe-2S</keyword>
<keyword id="KW-0249">Electron transport</keyword>
<keyword id="KW-0274">FAD</keyword>
<keyword id="KW-0285">Flavoprotein</keyword>
<keyword id="KW-0408">Iron</keyword>
<keyword id="KW-0411">Iron-sulfur</keyword>
<keyword id="KW-0479">Metal-binding</keyword>
<keyword id="KW-0665">Pyrimidine biosynthesis</keyword>
<keyword id="KW-1185">Reference proteome</keyword>
<keyword id="KW-0813">Transport</keyword>
<name>PYRK_METTH</name>
<feature type="chain" id="PRO_0000148378" description="Probable dihydroorotate dehydrogenase B (NAD(+)), electron transfer subunit">
    <location>
        <begin position="1"/>
        <end position="266"/>
    </location>
</feature>
<feature type="domain" description="FAD-binding FR-type" evidence="1">
    <location>
        <begin position="5"/>
        <end position="99"/>
    </location>
</feature>
<feature type="binding site" evidence="1">
    <location>
        <position position="217"/>
    </location>
    <ligand>
        <name>[2Fe-2S] cluster</name>
        <dbReference type="ChEBI" id="CHEBI:190135"/>
    </ligand>
</feature>
<feature type="binding site" evidence="1">
    <location>
        <position position="222"/>
    </location>
    <ligand>
        <name>[2Fe-2S] cluster</name>
        <dbReference type="ChEBI" id="CHEBI:190135"/>
    </ligand>
</feature>
<feature type="binding site" evidence="1">
    <location>
        <position position="225"/>
    </location>
    <ligand>
        <name>[2Fe-2S] cluster</name>
        <dbReference type="ChEBI" id="CHEBI:190135"/>
    </ligand>
</feature>
<feature type="binding site" evidence="1">
    <location>
        <position position="235"/>
    </location>
    <ligand>
        <name>[2Fe-2S] cluster</name>
        <dbReference type="ChEBI" id="CHEBI:190135"/>
    </ligand>
</feature>
<dbReference type="EMBL" id="AE000666">
    <property type="protein sequence ID" value="AAB85701.1"/>
    <property type="molecule type" value="Genomic_DNA"/>
</dbReference>
<dbReference type="PIR" id="H69028">
    <property type="entry name" value="H69028"/>
</dbReference>
<dbReference type="RefSeq" id="WP_010876836.1">
    <property type="nucleotide sequence ID" value="NC_000916.1"/>
</dbReference>
<dbReference type="SMR" id="O27280"/>
<dbReference type="FunCoup" id="O27280">
    <property type="interactions" value="91"/>
</dbReference>
<dbReference type="STRING" id="187420.MTH_1212"/>
<dbReference type="PaxDb" id="187420-MTH_1212"/>
<dbReference type="EnsemblBacteria" id="AAB85701">
    <property type="protein sequence ID" value="AAB85701"/>
    <property type="gene ID" value="MTH_1212"/>
</dbReference>
<dbReference type="GeneID" id="1471620"/>
<dbReference type="KEGG" id="mth:MTH_1212"/>
<dbReference type="PATRIC" id="fig|187420.15.peg.1190"/>
<dbReference type="HOGENOM" id="CLU_003827_1_1_2"/>
<dbReference type="InParanoid" id="O27280"/>
<dbReference type="UniPathway" id="UPA00070">
    <property type="reaction ID" value="UER00945"/>
</dbReference>
<dbReference type="Proteomes" id="UP000005223">
    <property type="component" value="Chromosome"/>
</dbReference>
<dbReference type="GO" id="GO:0051537">
    <property type="term" value="F:2 iron, 2 sulfur cluster binding"/>
    <property type="evidence" value="ECO:0007669"/>
    <property type="project" value="UniProtKB-KW"/>
</dbReference>
<dbReference type="GO" id="GO:0009055">
    <property type="term" value="F:electron transfer activity"/>
    <property type="evidence" value="ECO:0007669"/>
    <property type="project" value="UniProtKB-UniRule"/>
</dbReference>
<dbReference type="GO" id="GO:0050660">
    <property type="term" value="F:flavin adenine dinucleotide binding"/>
    <property type="evidence" value="ECO:0007669"/>
    <property type="project" value="InterPro"/>
</dbReference>
<dbReference type="GO" id="GO:0046872">
    <property type="term" value="F:metal ion binding"/>
    <property type="evidence" value="ECO:0007669"/>
    <property type="project" value="UniProtKB-KW"/>
</dbReference>
<dbReference type="GO" id="GO:0016491">
    <property type="term" value="F:oxidoreductase activity"/>
    <property type="evidence" value="ECO:0007669"/>
    <property type="project" value="InterPro"/>
</dbReference>
<dbReference type="GO" id="GO:0044205">
    <property type="term" value="P:'de novo' UMP biosynthetic process"/>
    <property type="evidence" value="ECO:0007669"/>
    <property type="project" value="UniProtKB-UniRule"/>
</dbReference>
<dbReference type="CDD" id="cd06220">
    <property type="entry name" value="DHOD_e_trans_like2"/>
    <property type="match status" value="1"/>
</dbReference>
<dbReference type="Gene3D" id="2.10.240.10">
    <property type="entry name" value="Dihydroorotate dehydrogenase, electron transfer subunit"/>
    <property type="match status" value="1"/>
</dbReference>
<dbReference type="Gene3D" id="3.40.50.80">
    <property type="entry name" value="Nucleotide-binding domain of ferredoxin-NADP reductase (FNR) module"/>
    <property type="match status" value="1"/>
</dbReference>
<dbReference type="Gene3D" id="2.40.30.10">
    <property type="entry name" value="Translation factors"/>
    <property type="match status" value="1"/>
</dbReference>
<dbReference type="HAMAP" id="MF_01211">
    <property type="entry name" value="DHODB_Fe_S_bind"/>
    <property type="match status" value="1"/>
</dbReference>
<dbReference type="InterPro" id="IPR012165">
    <property type="entry name" value="Cyt_c3_hydrogenase_gsu"/>
</dbReference>
<dbReference type="InterPro" id="IPR037117">
    <property type="entry name" value="Dihydroorotate_DH_ele_sf"/>
</dbReference>
<dbReference type="InterPro" id="IPR019480">
    <property type="entry name" value="Dihydroorotate_DH_Fe-S-bd"/>
</dbReference>
<dbReference type="InterPro" id="IPR023455">
    <property type="entry name" value="Dihydroorotate_DHASE_ETsu"/>
</dbReference>
<dbReference type="InterPro" id="IPR017927">
    <property type="entry name" value="FAD-bd_FR_type"/>
</dbReference>
<dbReference type="InterPro" id="IPR039261">
    <property type="entry name" value="FNR_nucleotide-bd"/>
</dbReference>
<dbReference type="InterPro" id="IPR001433">
    <property type="entry name" value="OxRdtase_FAD/NAD-bd"/>
</dbReference>
<dbReference type="InterPro" id="IPR050353">
    <property type="entry name" value="PyrK_electron_transfer"/>
</dbReference>
<dbReference type="InterPro" id="IPR017938">
    <property type="entry name" value="Riboflavin_synthase-like_b-brl"/>
</dbReference>
<dbReference type="NCBIfam" id="NF000796">
    <property type="entry name" value="PRK00054.1-1"/>
    <property type="match status" value="1"/>
</dbReference>
<dbReference type="PANTHER" id="PTHR43513">
    <property type="entry name" value="DIHYDROOROTATE DEHYDROGENASE B (NAD(+)), ELECTRON TRANSFER SUBUNIT"/>
    <property type="match status" value="1"/>
</dbReference>
<dbReference type="PANTHER" id="PTHR43513:SF3">
    <property type="entry name" value="DIHYDROOROTATE DEHYDROGENASE B (NAD(+)), ELECTRON TRANSFER SUBUNIT-RELATED"/>
    <property type="match status" value="1"/>
</dbReference>
<dbReference type="Pfam" id="PF10418">
    <property type="entry name" value="DHODB_Fe-S_bind"/>
    <property type="match status" value="1"/>
</dbReference>
<dbReference type="Pfam" id="PF00175">
    <property type="entry name" value="NAD_binding_1"/>
    <property type="match status" value="1"/>
</dbReference>
<dbReference type="PIRSF" id="PIRSF006816">
    <property type="entry name" value="Cyc3_hyd_g"/>
    <property type="match status" value="1"/>
</dbReference>
<dbReference type="SUPFAM" id="SSF52343">
    <property type="entry name" value="Ferredoxin reductase-like, C-terminal NADP-linked domain"/>
    <property type="match status" value="1"/>
</dbReference>
<dbReference type="SUPFAM" id="SSF63380">
    <property type="entry name" value="Riboflavin synthase domain-like"/>
    <property type="match status" value="1"/>
</dbReference>
<dbReference type="PROSITE" id="PS00197">
    <property type="entry name" value="2FE2S_FER_1"/>
    <property type="match status" value="1"/>
</dbReference>
<dbReference type="PROSITE" id="PS51384">
    <property type="entry name" value="FAD_FR"/>
    <property type="match status" value="1"/>
</dbReference>
<evidence type="ECO:0000255" key="1">
    <source>
        <dbReference type="HAMAP-Rule" id="MF_01211"/>
    </source>
</evidence>
<organism>
    <name type="scientific">Methanothermobacter thermautotrophicus (strain ATCC 29096 / DSM 1053 / JCM 10044 / NBRC 100330 / Delta H)</name>
    <name type="common">Methanobacterium thermoautotrophicum</name>
    <dbReference type="NCBI Taxonomy" id="187420"/>
    <lineage>
        <taxon>Archaea</taxon>
        <taxon>Methanobacteriati</taxon>
        <taxon>Methanobacteriota</taxon>
        <taxon>Methanomada group</taxon>
        <taxon>Methanobacteria</taxon>
        <taxon>Methanobacteriales</taxon>
        <taxon>Methanobacteriaceae</taxon>
        <taxon>Methanothermobacter</taxon>
    </lineage>
</organism>